<comment type="function">
    <text evidence="1">Cell wall formation. May play a specialized role in remodeling the cell wall. Specifically hydrolyzes the DD-diaminopimelate-alanine bonds in high-molecular-mass murein sacculi (By similarity).</text>
</comment>
<comment type="subcellular location">
    <subcellularLocation>
        <location evidence="3">Periplasm</location>
    </subcellularLocation>
</comment>
<comment type="similarity">
    <text evidence="3">Belongs to the peptidase S11 family.</text>
</comment>
<sequence>MFKKALFILSLCPSFALAQSYVVYDFTHNRVLESHASDSIQPIASVTKLMTANVFLENNKNPNCRIAITKEDTDRIKGTGTKLPKNIPISCNELLKAMLVHSDNYAAHALSRAAGISRRQFIKKMNEKAHQLGMYSTRFHDSSGLSSYNISSPMDLVKLAKYSLNKSDIKRLSNLSATYIQAGKQKLYIKNTNKLVRDEIFDAAVNKTGYIQESGYNLVFINKHRCKNATIGVISLNNTSSAYRSSFTKSKLEKFGCTALNGRTIRDVAGEAQYEDGYDEVGFNTLIQKLSK</sequence>
<evidence type="ECO:0000250" key="1"/>
<evidence type="ECO:0000255" key="2"/>
<evidence type="ECO:0000305" key="3"/>
<keyword id="KW-0133">Cell shape</keyword>
<keyword id="KW-0961">Cell wall biogenesis/degradation</keyword>
<keyword id="KW-0378">Hydrolase</keyword>
<keyword id="KW-0573">Peptidoglycan synthesis</keyword>
<keyword id="KW-0574">Periplasm</keyword>
<keyword id="KW-1185">Reference proteome</keyword>
<keyword id="KW-0732">Signal</keyword>
<organism>
    <name type="scientific">Haemophilus influenzae (strain ATCC 51907 / DSM 11121 / KW20 / Rd)</name>
    <dbReference type="NCBI Taxonomy" id="71421"/>
    <lineage>
        <taxon>Bacteria</taxon>
        <taxon>Pseudomonadati</taxon>
        <taxon>Pseudomonadota</taxon>
        <taxon>Gammaproteobacteria</taxon>
        <taxon>Pasteurellales</taxon>
        <taxon>Pasteurellaceae</taxon>
        <taxon>Haemophilus</taxon>
    </lineage>
</organism>
<accession>P44664</accession>
<protein>
    <recommendedName>
        <fullName>D-alanyl-D-alanine endopeptidase</fullName>
        <shortName>DD-endopeptidase</shortName>
        <ecNumber>3.4.21.-</ecNumber>
    </recommendedName>
    <alternativeName>
        <fullName>Penicillin-binding protein 7 homolog</fullName>
        <shortName>PBP-7</shortName>
    </alternativeName>
</protein>
<name>PBP7_HAEIN</name>
<dbReference type="EC" id="3.4.21.-"/>
<dbReference type="EMBL" id="L42023">
    <property type="protein sequence ID" value="AAC22022.1"/>
    <property type="molecule type" value="Genomic_DNA"/>
</dbReference>
<dbReference type="PIR" id="H64149">
    <property type="entry name" value="H64149"/>
</dbReference>
<dbReference type="RefSeq" id="NP_438525.1">
    <property type="nucleotide sequence ID" value="NC_000907.1"/>
</dbReference>
<dbReference type="SMR" id="P44664"/>
<dbReference type="STRING" id="71421.HI_0364"/>
<dbReference type="MEROPS" id="S11.002"/>
<dbReference type="EnsemblBacteria" id="AAC22022">
    <property type="protein sequence ID" value="AAC22022"/>
    <property type="gene ID" value="HI_0364"/>
</dbReference>
<dbReference type="KEGG" id="hin:HI_0364"/>
<dbReference type="PATRIC" id="fig|71421.8.peg.381"/>
<dbReference type="eggNOG" id="COG1686">
    <property type="taxonomic scope" value="Bacteria"/>
</dbReference>
<dbReference type="HOGENOM" id="CLU_027070_4_1_6"/>
<dbReference type="OrthoDB" id="5688590at2"/>
<dbReference type="PhylomeDB" id="P44664"/>
<dbReference type="BioCyc" id="HINF71421:G1GJ1-377-MONOMER"/>
<dbReference type="Proteomes" id="UP000000579">
    <property type="component" value="Chromosome"/>
</dbReference>
<dbReference type="GO" id="GO:0042597">
    <property type="term" value="C:periplasmic space"/>
    <property type="evidence" value="ECO:0007669"/>
    <property type="project" value="UniProtKB-SubCell"/>
</dbReference>
<dbReference type="GO" id="GO:0008800">
    <property type="term" value="F:beta-lactamase activity"/>
    <property type="evidence" value="ECO:0000318"/>
    <property type="project" value="GO_Central"/>
</dbReference>
<dbReference type="GO" id="GO:0009002">
    <property type="term" value="F:serine-type D-Ala-D-Ala carboxypeptidase activity"/>
    <property type="evidence" value="ECO:0007669"/>
    <property type="project" value="InterPro"/>
</dbReference>
<dbReference type="GO" id="GO:0030655">
    <property type="term" value="P:beta-lactam antibiotic catabolic process"/>
    <property type="evidence" value="ECO:0007669"/>
    <property type="project" value="InterPro"/>
</dbReference>
<dbReference type="GO" id="GO:0071555">
    <property type="term" value="P:cell wall organization"/>
    <property type="evidence" value="ECO:0007669"/>
    <property type="project" value="UniProtKB-KW"/>
</dbReference>
<dbReference type="GO" id="GO:0009252">
    <property type="term" value="P:peptidoglycan biosynthetic process"/>
    <property type="evidence" value="ECO:0007669"/>
    <property type="project" value="UniProtKB-KW"/>
</dbReference>
<dbReference type="GO" id="GO:0006508">
    <property type="term" value="P:proteolysis"/>
    <property type="evidence" value="ECO:0007669"/>
    <property type="project" value="InterPro"/>
</dbReference>
<dbReference type="GO" id="GO:0008360">
    <property type="term" value="P:regulation of cell shape"/>
    <property type="evidence" value="ECO:0007669"/>
    <property type="project" value="UniProtKB-KW"/>
</dbReference>
<dbReference type="GO" id="GO:0046677">
    <property type="term" value="P:response to antibiotic"/>
    <property type="evidence" value="ECO:0007669"/>
    <property type="project" value="InterPro"/>
</dbReference>
<dbReference type="Gene3D" id="3.40.710.10">
    <property type="entry name" value="DD-peptidase/beta-lactamase superfamily"/>
    <property type="match status" value="1"/>
</dbReference>
<dbReference type="InterPro" id="IPR012338">
    <property type="entry name" value="Beta-lactam/transpept-like"/>
</dbReference>
<dbReference type="InterPro" id="IPR000871">
    <property type="entry name" value="Beta-lactam_class-A"/>
</dbReference>
<dbReference type="InterPro" id="IPR018044">
    <property type="entry name" value="Peptidase_S11"/>
</dbReference>
<dbReference type="InterPro" id="IPR001967">
    <property type="entry name" value="Peptidase_S11_N"/>
</dbReference>
<dbReference type="PANTHER" id="PTHR35333">
    <property type="entry name" value="BETA-LACTAMASE"/>
    <property type="match status" value="1"/>
</dbReference>
<dbReference type="PANTHER" id="PTHR35333:SF3">
    <property type="entry name" value="BETA-LACTAMASE-TYPE TRANSPEPTIDASE FOLD CONTAINING PROTEIN"/>
    <property type="match status" value="1"/>
</dbReference>
<dbReference type="Pfam" id="PF00768">
    <property type="entry name" value="Peptidase_S11"/>
    <property type="match status" value="1"/>
</dbReference>
<dbReference type="PRINTS" id="PR00725">
    <property type="entry name" value="DADACBPTASE1"/>
</dbReference>
<dbReference type="SUPFAM" id="SSF56601">
    <property type="entry name" value="beta-lactamase/transpeptidase-like"/>
    <property type="match status" value="1"/>
</dbReference>
<reference key="1">
    <citation type="journal article" date="1995" name="Science">
        <title>Whole-genome random sequencing and assembly of Haemophilus influenzae Rd.</title>
        <authorList>
            <person name="Fleischmann R.D."/>
            <person name="Adams M.D."/>
            <person name="White O."/>
            <person name="Clayton R.A."/>
            <person name="Kirkness E.F."/>
            <person name="Kerlavage A.R."/>
            <person name="Bult C.J."/>
            <person name="Tomb J.-F."/>
            <person name="Dougherty B.A."/>
            <person name="Merrick J.M."/>
            <person name="McKenney K."/>
            <person name="Sutton G.G."/>
            <person name="FitzHugh W."/>
            <person name="Fields C.A."/>
            <person name="Gocayne J.D."/>
            <person name="Scott J.D."/>
            <person name="Shirley R."/>
            <person name="Liu L.-I."/>
            <person name="Glodek A."/>
            <person name="Kelley J.M."/>
            <person name="Weidman J.F."/>
            <person name="Phillips C.A."/>
            <person name="Spriggs T."/>
            <person name="Hedblom E."/>
            <person name="Cotton M.D."/>
            <person name="Utterback T.R."/>
            <person name="Hanna M.C."/>
            <person name="Nguyen D.T."/>
            <person name="Saudek D.M."/>
            <person name="Brandon R.C."/>
            <person name="Fine L.D."/>
            <person name="Fritchman J.L."/>
            <person name="Fuhrmann J.L."/>
            <person name="Geoghagen N.S.M."/>
            <person name="Gnehm C.L."/>
            <person name="McDonald L.A."/>
            <person name="Small K.V."/>
            <person name="Fraser C.M."/>
            <person name="Smith H.O."/>
            <person name="Venter J.C."/>
        </authorList>
    </citation>
    <scope>NUCLEOTIDE SEQUENCE [LARGE SCALE GENOMIC DNA]</scope>
    <source>
        <strain>ATCC 51907 / DSM 11121 / KW20 / Rd</strain>
    </source>
</reference>
<gene>
    <name type="primary">pbpG</name>
    <name type="ordered locus">HI_0364</name>
</gene>
<feature type="signal peptide" evidence="2">
    <location>
        <begin position="1"/>
        <end position="18"/>
    </location>
</feature>
<feature type="chain" id="PRO_0000027238" description="D-alanyl-D-alanine endopeptidase">
    <location>
        <begin position="19"/>
        <end position="292"/>
    </location>
</feature>
<feature type="active site" description="Acyl-ester intermediate" evidence="1">
    <location>
        <position position="45"/>
    </location>
</feature>
<feature type="active site" description="Proton acceptor" evidence="1">
    <location>
        <position position="48"/>
    </location>
</feature>
<feature type="active site" evidence="1">
    <location>
        <position position="102"/>
    </location>
</feature>
<feature type="binding site" evidence="1">
    <location>
        <position position="207"/>
    </location>
    <ligand>
        <name>substrate</name>
    </ligand>
</feature>
<proteinExistence type="inferred from homology"/>